<gene>
    <name evidence="9" type="primary">mtm-9</name>
    <name evidence="9" type="synonym">cup-10</name>
    <name evidence="9" type="ORF">Y39H10A.3</name>
</gene>
<comment type="function">
    <text evidence="3 4 5">May act as a regulatory subunit for mtm-6. In association with phosphatase mtm-6, plays a role in endosome trafficking probably by regulating phosphatidylinositol-3-phosphate levels (PubMed:14565969). Regulates fluid phase endocytosis in coelomocytes (PubMed:14565969). Regulates posterior migration of QL neuroblast descendants and the anterior migration of QR neuroblast descendants and HSN neurons during larval development probably by controlling Wnt ligand secretion through the regulation of sorting receptor mig-14 trafficking (PubMed:21076391). Involved in the formation of correct synapse number in DA9 motor neurons (PubMed:25479419).</text>
</comment>
<comment type="subunit">
    <text evidence="3">Heterodimer with lipid phosphatase mtm-6.</text>
</comment>
<comment type="subcellular location">
    <subcellularLocation>
        <location evidence="3">Cytoplasm</location>
    </subcellularLocation>
    <subcellularLocation>
        <location evidence="3">Membrane</location>
        <topology evidence="3">Peripheral membrane protein</topology>
    </subcellularLocation>
</comment>
<comment type="alternative products">
    <event type="alternative splicing"/>
    <isoform>
        <id>Q965W9-1</id>
        <name evidence="9">a</name>
        <sequence type="displayed"/>
    </isoform>
    <isoform>
        <id>Q965W9-2</id>
        <name evidence="10">b</name>
        <sequence type="described" ref="VSP_058288"/>
    </isoform>
</comment>
<comment type="developmental stage">
    <text evidence="4">Expressed in the intestine and in head and tail neurons including CAN neuron at L1 stage larva. Expressed in the postdeirid neuron, in the developing vulva and in rectal epithelial cells at L2 stage larva. Expressed in lateral hypodermal (seam) cells and the hypodermal syncytium (hyp7) at L3 stage larva.</text>
</comment>
<comment type="similarity">
    <text evidence="6">Belongs to the protein-tyrosine phosphatase family. Non-receptor class myotubularin subfamily.</text>
</comment>
<comment type="caution">
    <text evidence="6">Although it belongs to the non-receptor class myotubularin subfamily, lacks the conserved active site cysteine residue at position 346 in the dsPTPase catalytic loop, suggesting that it has no phosphatase activity.</text>
</comment>
<sequence length="569" mass="64537">MELSELIEVTRVRDAFMRKGPRPAQVGDICIFGHHLIFAPTTVGKEVPDNAEEFWLLHKAVDRVLCEPISKENPQRGGLLALKCKNFLLIIFEIGDLEICRATARTIESLSNINGFLHDYAFFYNSPFTILDDGWSAFDLEQEFARLMLSTDAFRISSVNENFAICPTYPEKLIVPKGIGDDYLKISATFREGGRFPVLSYFHKETKSPLVRCSQPLIGPTNRRCREDETILNSMITVNRGYIIDTRSKSSATAAKAKGGGAEPQGNYRQWRYIQCPIPRQREIHDALTRMVDVCSERKVTSDRWVSRVGQAGWLSSVAASLEAAANVAQCIYNERLEEVPVVIHGGDGLDSTLIASSLAQILLDADARTIRGFESVIEREWICGGHPFSLRNNHCAYAEGTVTGPFESPVFLVFLDAVHQMIAQYPMSFEFDENFLIFLFEHAYASEFGSFLGNCEKEKKDNGIRKKTVSLWSHVHHPENMKQFVNVCYDPTPGVIWPSIAPQCIKIWDRLFFRWQRPDNSWSTPETETIQSLADHWKLREKELIAKASSLRRSVVELSRELRVLSPM</sequence>
<name>MTMR9_CAEEL</name>
<evidence type="ECO:0000250" key="1">
    <source>
        <dbReference type="UniProtKB" id="Q96QG7"/>
    </source>
</evidence>
<evidence type="ECO:0000255" key="2">
    <source>
        <dbReference type="PROSITE-ProRule" id="PRU00669"/>
    </source>
</evidence>
<evidence type="ECO:0000269" key="3">
    <source>
    </source>
</evidence>
<evidence type="ECO:0000269" key="4">
    <source>
    </source>
</evidence>
<evidence type="ECO:0000269" key="5">
    <source>
    </source>
</evidence>
<evidence type="ECO:0000305" key="6"/>
<evidence type="ECO:0000312" key="7">
    <source>
        <dbReference type="EMBL" id="AAP79303.1"/>
    </source>
</evidence>
<evidence type="ECO:0000312" key="8">
    <source>
        <dbReference type="Proteomes" id="UP000001940"/>
    </source>
</evidence>
<evidence type="ECO:0000312" key="9">
    <source>
        <dbReference type="WormBase" id="Y39H10A.3a"/>
    </source>
</evidence>
<evidence type="ECO:0000312" key="10">
    <source>
        <dbReference type="WormBase" id="Y39H10A.3b"/>
    </source>
</evidence>
<protein>
    <recommendedName>
        <fullName evidence="1">Myotubularin-related protein 9</fullName>
    </recommendedName>
    <alternativeName>
        <fullName evidence="6">Inactive phosphatidylinositol 3-phosphatase 9</fullName>
    </alternativeName>
</protein>
<dbReference type="EMBL" id="AY313178">
    <property type="protein sequence ID" value="AAP79303.1"/>
    <property type="molecule type" value="mRNA"/>
</dbReference>
<dbReference type="EMBL" id="BX284605">
    <property type="protein sequence ID" value="CCD73284.1"/>
    <property type="molecule type" value="Genomic_DNA"/>
</dbReference>
<dbReference type="EMBL" id="BX284605">
    <property type="protein sequence ID" value="CCD73285.1"/>
    <property type="molecule type" value="Genomic_DNA"/>
</dbReference>
<dbReference type="RefSeq" id="NP_504038.1">
    <molecule id="Q965W9-1"/>
    <property type="nucleotide sequence ID" value="NM_071637.7"/>
</dbReference>
<dbReference type="RefSeq" id="NP_872167.2">
    <molecule id="Q965W9-2"/>
    <property type="nucleotide sequence ID" value="NM_182367.6"/>
</dbReference>
<dbReference type="SMR" id="Q965W9"/>
<dbReference type="ComplexPortal" id="CPX-4024">
    <property type="entry name" value="MTM6-MTM9 myotubularin lipid phosphatase complex"/>
</dbReference>
<dbReference type="FunCoup" id="Q965W9">
    <property type="interactions" value="2706"/>
</dbReference>
<dbReference type="STRING" id="6239.Y39H10A.3a.1"/>
<dbReference type="PaxDb" id="6239-Y39H10A.3a"/>
<dbReference type="PeptideAtlas" id="Q965W9"/>
<dbReference type="EnsemblMetazoa" id="Y39H10A.3a.1">
    <molecule id="Q965W9-1"/>
    <property type="protein sequence ID" value="Y39H10A.3a.1"/>
    <property type="gene ID" value="WBGene00003479"/>
</dbReference>
<dbReference type="EnsemblMetazoa" id="Y39H10A.3b.1">
    <molecule id="Q965W9-2"/>
    <property type="protein sequence ID" value="Y39H10A.3b.1"/>
    <property type="gene ID" value="WBGene00003479"/>
</dbReference>
<dbReference type="GeneID" id="178790"/>
<dbReference type="KEGG" id="cel:CELE_Y39H10A.3"/>
<dbReference type="UCSC" id="Y39H10A.3a">
    <property type="organism name" value="c. elegans"/>
</dbReference>
<dbReference type="AGR" id="WB:WBGene00003479"/>
<dbReference type="CTD" id="178790"/>
<dbReference type="WormBase" id="Y39H10A.3a">
    <molecule id="Q965W9-1"/>
    <property type="protein sequence ID" value="CE26073"/>
    <property type="gene ID" value="WBGene00003479"/>
    <property type="gene designation" value="mtm-9"/>
</dbReference>
<dbReference type="WormBase" id="Y39H10A.3b">
    <molecule id="Q965W9-2"/>
    <property type="protein sequence ID" value="CE36959"/>
    <property type="gene ID" value="WBGene00003479"/>
    <property type="gene designation" value="mtm-9"/>
</dbReference>
<dbReference type="eggNOG" id="KOG1089">
    <property type="taxonomic scope" value="Eukaryota"/>
</dbReference>
<dbReference type="GeneTree" id="ENSGT00940000169600"/>
<dbReference type="InParanoid" id="Q965W9"/>
<dbReference type="OMA" id="IEREWIC"/>
<dbReference type="OrthoDB" id="271628at2759"/>
<dbReference type="PhylomeDB" id="Q965W9"/>
<dbReference type="BRENDA" id="3.1.3.64">
    <property type="organism ID" value="1045"/>
</dbReference>
<dbReference type="Reactome" id="R-CEL-1660499">
    <property type="pathway name" value="Synthesis of PIPs at the plasma membrane"/>
</dbReference>
<dbReference type="PRO" id="PR:Q965W9"/>
<dbReference type="Proteomes" id="UP000001940">
    <property type="component" value="Chromosome V"/>
</dbReference>
<dbReference type="Bgee" id="WBGene00003479">
    <property type="expression patterns" value="Expressed in germ line (C elegans) and 4 other cell types or tissues"/>
</dbReference>
<dbReference type="GO" id="GO:0016324">
    <property type="term" value="C:apical plasma membrane"/>
    <property type="evidence" value="ECO:0000314"/>
    <property type="project" value="ComplexPortal"/>
</dbReference>
<dbReference type="GO" id="GO:0005737">
    <property type="term" value="C:cytoplasm"/>
    <property type="evidence" value="ECO:0000318"/>
    <property type="project" value="GO_Central"/>
</dbReference>
<dbReference type="GO" id="GO:0005829">
    <property type="term" value="C:cytosol"/>
    <property type="evidence" value="ECO:0000314"/>
    <property type="project" value="WormBase"/>
</dbReference>
<dbReference type="GO" id="GO:1904144">
    <property type="term" value="C:phosphatidylinositol phosphate phosphatase complex"/>
    <property type="evidence" value="ECO:0000303"/>
    <property type="project" value="ComplexPortal"/>
</dbReference>
<dbReference type="GO" id="GO:0005886">
    <property type="term" value="C:plasma membrane"/>
    <property type="evidence" value="ECO:0000314"/>
    <property type="project" value="WormBase"/>
</dbReference>
<dbReference type="GO" id="GO:0019902">
    <property type="term" value="F:phosphatase binding"/>
    <property type="evidence" value="ECO:0000353"/>
    <property type="project" value="WormBase"/>
</dbReference>
<dbReference type="GO" id="GO:0019903">
    <property type="term" value="F:protein phosphatase binding"/>
    <property type="evidence" value="ECO:0000318"/>
    <property type="project" value="GO_Central"/>
</dbReference>
<dbReference type="GO" id="GO:0006897">
    <property type="term" value="P:endocytosis"/>
    <property type="evidence" value="ECO:0000315"/>
    <property type="project" value="WormBase"/>
</dbReference>
<dbReference type="GO" id="GO:0010507">
    <property type="term" value="P:negative regulation of autophagy"/>
    <property type="evidence" value="ECO:0000318"/>
    <property type="project" value="GO_Central"/>
</dbReference>
<dbReference type="GO" id="GO:0046856">
    <property type="term" value="P:phosphatidylinositol dephosphorylation"/>
    <property type="evidence" value="ECO:0000318"/>
    <property type="project" value="GO_Central"/>
</dbReference>
<dbReference type="GO" id="GO:0006907">
    <property type="term" value="P:pinocytosis"/>
    <property type="evidence" value="ECO:0000315"/>
    <property type="project" value="WormBase"/>
</dbReference>
<dbReference type="GO" id="GO:0030334">
    <property type="term" value="P:regulation of cell migration"/>
    <property type="evidence" value="ECO:0000315"/>
    <property type="project" value="WormBase"/>
</dbReference>
<dbReference type="GO" id="GO:0007416">
    <property type="term" value="P:synapse assembly"/>
    <property type="evidence" value="ECO:0000303"/>
    <property type="project" value="ComplexPortal"/>
</dbReference>
<dbReference type="CDD" id="cd13211">
    <property type="entry name" value="PH-GRAM_MTMR9"/>
    <property type="match status" value="1"/>
</dbReference>
<dbReference type="CDD" id="cd14536">
    <property type="entry name" value="PTP-MTMR9"/>
    <property type="match status" value="1"/>
</dbReference>
<dbReference type="Gene3D" id="2.30.29.30">
    <property type="entry name" value="Pleckstrin-homology domain (PH domain)/Phosphotyrosine-binding domain (PTB)"/>
    <property type="match status" value="1"/>
</dbReference>
<dbReference type="InterPro" id="IPR030564">
    <property type="entry name" value="Myotubularin"/>
</dbReference>
<dbReference type="InterPro" id="IPR010569">
    <property type="entry name" value="Myotubularin-like_Pase_dom"/>
</dbReference>
<dbReference type="InterPro" id="IPR011993">
    <property type="entry name" value="PH-like_dom_sf"/>
</dbReference>
<dbReference type="InterPro" id="IPR029021">
    <property type="entry name" value="Prot-tyrosine_phosphatase-like"/>
</dbReference>
<dbReference type="PANTHER" id="PTHR10807:SF73">
    <property type="entry name" value="LD06050P"/>
    <property type="match status" value="1"/>
</dbReference>
<dbReference type="PANTHER" id="PTHR10807">
    <property type="entry name" value="MYOTUBULARIN-RELATED"/>
    <property type="match status" value="1"/>
</dbReference>
<dbReference type="Pfam" id="PF06602">
    <property type="entry name" value="Myotub-related"/>
    <property type="match status" value="1"/>
</dbReference>
<dbReference type="Pfam" id="PF21098">
    <property type="entry name" value="PH-GRAM_MTMR6-like"/>
    <property type="match status" value="1"/>
</dbReference>
<dbReference type="SUPFAM" id="SSF52799">
    <property type="entry name" value="(Phosphotyrosine protein) phosphatases II"/>
    <property type="match status" value="1"/>
</dbReference>
<dbReference type="PROSITE" id="PS51339">
    <property type="entry name" value="PPASE_MYOTUBULARIN"/>
    <property type="match status" value="1"/>
</dbReference>
<organism evidence="8">
    <name type="scientific">Caenorhabditis elegans</name>
    <dbReference type="NCBI Taxonomy" id="6239"/>
    <lineage>
        <taxon>Eukaryota</taxon>
        <taxon>Metazoa</taxon>
        <taxon>Ecdysozoa</taxon>
        <taxon>Nematoda</taxon>
        <taxon>Chromadorea</taxon>
        <taxon>Rhabditida</taxon>
        <taxon>Rhabditina</taxon>
        <taxon>Rhabditomorpha</taxon>
        <taxon>Rhabditoidea</taxon>
        <taxon>Rhabditidae</taxon>
        <taxon>Peloderinae</taxon>
        <taxon>Caenorhabditis</taxon>
    </lineage>
</organism>
<reference evidence="7" key="1">
    <citation type="journal article" date="2004" name="Mol. Biol. Cell">
        <title>Disease-related myotubularins function in endocytic traffic in Caenorhabditis elegans.</title>
        <authorList>
            <person name="Dang H."/>
            <person name="Li Z."/>
            <person name="Skolnik E.Y."/>
            <person name="Fares H."/>
        </authorList>
    </citation>
    <scope>NUCLEOTIDE SEQUENCE [MRNA] (ISOFORM A)</scope>
    <scope>FUNCTION</scope>
    <scope>INTERACTION WITH MTM-6</scope>
    <scope>SUBCELLULAR LOCATION</scope>
</reference>
<reference evidence="8" key="2">
    <citation type="journal article" date="1998" name="Science">
        <title>Genome sequence of the nematode C. elegans: a platform for investigating biology.</title>
        <authorList>
            <consortium name="The C. elegans sequencing consortium"/>
        </authorList>
    </citation>
    <scope>NUCLEOTIDE SEQUENCE [LARGE SCALE GENOMIC DNA]</scope>
    <source>
        <strain evidence="8">Bristol N2</strain>
    </source>
</reference>
<reference evidence="6" key="3">
    <citation type="journal article" date="2010" name="EMBO J.">
        <title>Wnt signalling requires MTM-6 and MTM-9 myotubularin lipid-phosphatase function in Wnt-producing cells.</title>
        <authorList>
            <person name="Silhankova M."/>
            <person name="Port F."/>
            <person name="Harterink M."/>
            <person name="Basler K."/>
            <person name="Korswagen H.C."/>
        </authorList>
    </citation>
    <scope>FUNCTION</scope>
    <scope>DEVELOPMENTAL STAGE</scope>
</reference>
<reference evidence="6" key="4">
    <citation type="journal article" date="2014" name="PLoS ONE">
        <title>MTM-6, a phosphoinositide phosphatase, is required to promote synapse formation in Caenorhabditis elegans.</title>
        <authorList>
            <person name="Ericson V.R."/>
            <person name="Spilker K.A."/>
            <person name="Tugizova M.S."/>
            <person name="Shen K."/>
        </authorList>
    </citation>
    <scope>FUNCTION</scope>
</reference>
<proteinExistence type="evidence at protein level"/>
<accession>Q965W9</accession>
<accession>Q6F3C7</accession>
<feature type="chain" id="PRO_0000436177" description="Myotubularin-related protein 9" evidence="6">
    <location>
        <begin position="1"/>
        <end position="569"/>
    </location>
</feature>
<feature type="domain" description="Myotubularin phosphatase" evidence="2">
    <location>
        <begin position="134"/>
        <end position="513"/>
    </location>
</feature>
<feature type="splice variant" id="VSP_058288" description="In isoform b." evidence="6">
    <original>CEPISKENPQRGGLLALKCKNFLLIIFEIGDLEICRATARTIESLSNIN</original>
    <variation>Y</variation>
    <location>
        <begin position="66"/>
        <end position="114"/>
    </location>
</feature>
<keyword id="KW-0025">Alternative splicing</keyword>
<keyword id="KW-0963">Cytoplasm</keyword>
<keyword id="KW-0254">Endocytosis</keyword>
<keyword id="KW-0472">Membrane</keyword>
<keyword id="KW-1185">Reference proteome</keyword>